<dbReference type="EC" id="2.7.7.48" evidence="1"/>
<dbReference type="EMBL" id="CY007625">
    <property type="protein sequence ID" value="ABC46573.1"/>
    <property type="molecule type" value="Genomic_RNA"/>
</dbReference>
<dbReference type="SMR" id="Q2RCG8"/>
<dbReference type="Proteomes" id="UP000008577">
    <property type="component" value="Genome"/>
</dbReference>
<dbReference type="GO" id="GO:0030430">
    <property type="term" value="C:host cell cytoplasm"/>
    <property type="evidence" value="ECO:0007669"/>
    <property type="project" value="UniProtKB-SubCell"/>
</dbReference>
<dbReference type="GO" id="GO:0042025">
    <property type="term" value="C:host cell nucleus"/>
    <property type="evidence" value="ECO:0007669"/>
    <property type="project" value="UniProtKB-SubCell"/>
</dbReference>
<dbReference type="GO" id="GO:0000166">
    <property type="term" value="F:nucleotide binding"/>
    <property type="evidence" value="ECO:0007669"/>
    <property type="project" value="UniProtKB-UniRule"/>
</dbReference>
<dbReference type="GO" id="GO:0003723">
    <property type="term" value="F:RNA binding"/>
    <property type="evidence" value="ECO:0007669"/>
    <property type="project" value="InterPro"/>
</dbReference>
<dbReference type="GO" id="GO:0003968">
    <property type="term" value="F:RNA-directed RNA polymerase activity"/>
    <property type="evidence" value="ECO:0007669"/>
    <property type="project" value="UniProtKB-UniRule"/>
</dbReference>
<dbReference type="GO" id="GO:0006351">
    <property type="term" value="P:DNA-templated transcription"/>
    <property type="evidence" value="ECO:0007669"/>
    <property type="project" value="UniProtKB-UniRule"/>
</dbReference>
<dbReference type="GO" id="GO:0039657">
    <property type="term" value="P:symbiont-mediated suppression of host gene expression"/>
    <property type="evidence" value="ECO:0007669"/>
    <property type="project" value="UniProtKB-KW"/>
</dbReference>
<dbReference type="GO" id="GO:0039523">
    <property type="term" value="P:symbiont-mediated suppression of host mRNA transcription via inhibition of RNA polymerase II activity"/>
    <property type="evidence" value="ECO:0007669"/>
    <property type="project" value="UniProtKB-UniRule"/>
</dbReference>
<dbReference type="GO" id="GO:0039694">
    <property type="term" value="P:viral RNA genome replication"/>
    <property type="evidence" value="ECO:0007669"/>
    <property type="project" value="UniProtKB-UniRule"/>
</dbReference>
<dbReference type="GO" id="GO:0019083">
    <property type="term" value="P:viral transcription"/>
    <property type="evidence" value="ECO:0007669"/>
    <property type="project" value="UniProtKB-KW"/>
</dbReference>
<dbReference type="Gene3D" id="6.10.140.720">
    <property type="match status" value="1"/>
</dbReference>
<dbReference type="HAMAP" id="MF_04065">
    <property type="entry name" value="INFV_RDRP"/>
    <property type="match status" value="1"/>
</dbReference>
<dbReference type="InterPro" id="IPR007099">
    <property type="entry name" value="RNA-dir_pol_NSvirus"/>
</dbReference>
<dbReference type="InterPro" id="IPR001407">
    <property type="entry name" value="RNA_pol_PB1_influenza"/>
</dbReference>
<dbReference type="Pfam" id="PF00602">
    <property type="entry name" value="Flu_PB1"/>
    <property type="match status" value="1"/>
</dbReference>
<dbReference type="PIRSF" id="PIRSF000827">
    <property type="entry name" value="RdRPol_OMV"/>
    <property type="match status" value="1"/>
</dbReference>
<dbReference type="PROSITE" id="PS50525">
    <property type="entry name" value="RDRP_SSRNA_NEG_SEG"/>
    <property type="match status" value="1"/>
</dbReference>
<comment type="function">
    <text evidence="1">RNA-dependent RNA polymerase which is responsible for replication and transcription of virus RNA segments. The transcription of viral mRNAs occurs by a unique mechanism called cap-snatching. 5' methylated caps of cellular mRNAs are cleaved after 10-13 nucleotides by PA. In turn, these short capped RNAs are used as primers by PB1 for transcription of viral mRNAs. During virus replication, PB1 initiates RNA synthesis and copy vRNA into complementary RNA (cRNA) which in turn serves as a template for the production of more vRNAs.</text>
</comment>
<comment type="catalytic activity">
    <reaction evidence="1">
        <text>RNA(n) + a ribonucleoside 5'-triphosphate = RNA(n+1) + diphosphate</text>
        <dbReference type="Rhea" id="RHEA:21248"/>
        <dbReference type="Rhea" id="RHEA-COMP:14527"/>
        <dbReference type="Rhea" id="RHEA-COMP:17342"/>
        <dbReference type="ChEBI" id="CHEBI:33019"/>
        <dbReference type="ChEBI" id="CHEBI:61557"/>
        <dbReference type="ChEBI" id="CHEBI:140395"/>
        <dbReference type="EC" id="2.7.7.48"/>
    </reaction>
</comment>
<comment type="subunit">
    <text evidence="1">Influenza RNA polymerase is composed of three subunits: PB1, PB2 and PA. Interacts (via N-terminus) with PA (via C-terminus). Interacts (via C-terminus) with PB2 (via N-terminus); this interaction is essential for transcription initiation.</text>
</comment>
<comment type="subcellular location">
    <subcellularLocation>
        <location evidence="1">Host nucleus</location>
    </subcellularLocation>
    <subcellularLocation>
        <location evidence="1">Host cytoplasm</location>
    </subcellularLocation>
</comment>
<comment type="PTM">
    <text evidence="1">Phosphorylated by host PRKCA.</text>
</comment>
<comment type="similarity">
    <text evidence="1">Belongs to the influenza viruses polymerase PB1 family.</text>
</comment>
<gene>
    <name evidence="1" type="primary">PB1</name>
</gene>
<name>RDRP_I80A4</name>
<evidence type="ECO:0000255" key="1">
    <source>
        <dbReference type="HAMAP-Rule" id="MF_04065"/>
    </source>
</evidence>
<evidence type="ECO:0000256" key="2">
    <source>
        <dbReference type="SAM" id="MobiDB-lite"/>
    </source>
</evidence>
<keyword id="KW-1262">Eukaryotic host gene expression shutoff by virus</keyword>
<keyword id="KW-1191">Eukaryotic host transcription shutoff by virus</keyword>
<keyword id="KW-1035">Host cytoplasm</keyword>
<keyword id="KW-1190">Host gene expression shutoff by virus</keyword>
<keyword id="KW-1048">Host nucleus</keyword>
<keyword id="KW-0945">Host-virus interaction</keyword>
<keyword id="KW-1104">Inhibition of host RNA polymerase II by virus</keyword>
<keyword id="KW-0547">Nucleotide-binding</keyword>
<keyword id="KW-0548">Nucleotidyltransferase</keyword>
<keyword id="KW-0597">Phosphoprotein</keyword>
<keyword id="KW-0696">RNA-directed RNA polymerase</keyword>
<keyword id="KW-0808">Transferase</keyword>
<keyword id="KW-0693">Viral RNA replication</keyword>
<keyword id="KW-1195">Viral transcription</keyword>
<feature type="chain" id="PRO_0000279605" description="RNA-directed RNA polymerase catalytic subunit">
    <location>
        <begin position="1"/>
        <end position="757"/>
    </location>
</feature>
<feature type="domain" description="RdRp catalytic" evidence="1">
    <location>
        <begin position="286"/>
        <end position="483"/>
    </location>
</feature>
<feature type="region of interest" description="Disordered" evidence="2">
    <location>
        <begin position="50"/>
        <end position="82"/>
    </location>
</feature>
<feature type="region of interest" description="Promoter-binding site" evidence="1">
    <location>
        <begin position="249"/>
        <end position="256"/>
    </location>
</feature>
<feature type="short sequence motif" description="Nuclear localization signal" evidence="1">
    <location>
        <begin position="187"/>
        <end position="195"/>
    </location>
</feature>
<feature type="short sequence motif" description="Nuclear localization signal" evidence="1">
    <location>
        <begin position="203"/>
        <end position="216"/>
    </location>
</feature>
<feature type="compositionally biased region" description="Polar residues" evidence="2">
    <location>
        <begin position="55"/>
        <end position="64"/>
    </location>
</feature>
<accession>Q2RCG8</accession>
<protein>
    <recommendedName>
        <fullName evidence="1">RNA-directed RNA polymerase catalytic subunit</fullName>
        <ecNumber evidence="1">2.7.7.48</ecNumber>
    </recommendedName>
    <alternativeName>
        <fullName evidence="1">Polymerase basic protein 1</fullName>
        <shortName evidence="1">PB1</shortName>
    </alternativeName>
    <alternativeName>
        <fullName evidence="1">RNA-directed RNA polymerase subunit P1</fullName>
    </alternativeName>
</protein>
<proteinExistence type="inferred from homology"/>
<organismHost>
    <name type="scientific">Aves</name>
    <dbReference type="NCBI Taxonomy" id="8782"/>
</organismHost>
<organismHost>
    <name type="scientific">Cetacea</name>
    <name type="common">whales</name>
    <dbReference type="NCBI Taxonomy" id="9721"/>
</organismHost>
<organismHost>
    <name type="scientific">Homo sapiens</name>
    <name type="common">Human</name>
    <dbReference type="NCBI Taxonomy" id="9606"/>
</organismHost>
<organismHost>
    <name type="scientific">Phocidae</name>
    <name type="common">true seals</name>
    <dbReference type="NCBI Taxonomy" id="9709"/>
</organismHost>
<organismHost>
    <name type="scientific">Sus scrofa</name>
    <name type="common">Pig</name>
    <dbReference type="NCBI Taxonomy" id="9823"/>
</organismHost>
<reference key="1">
    <citation type="submission" date="2005-12" db="EMBL/GenBank/DDBJ databases">
        <title>The NIAID influenza genome sequencing project.</title>
        <authorList>
            <person name="Ghedin E."/>
            <person name="Spiro D."/>
            <person name="Miller N."/>
            <person name="Zaborsky J."/>
            <person name="Feldblyum T."/>
            <person name="Subbu V."/>
            <person name="Shumway M."/>
            <person name="Sparenborg J."/>
            <person name="Groveman L."/>
            <person name="Halpin R."/>
            <person name="Sitz J."/>
            <person name="Koo H."/>
            <person name="Salzberg S.L."/>
            <person name="Webster R.G."/>
            <person name="Hoffmann E."/>
            <person name="Krauss S."/>
            <person name="Naeve C."/>
            <person name="Bao Y."/>
            <person name="Bolotov P."/>
            <person name="Dernovoy D."/>
            <person name="Kiryutin B."/>
            <person name="Lipman D.J."/>
            <person name="Tatusova T."/>
        </authorList>
    </citation>
    <scope>NUCLEOTIDE SEQUENCE [GENOMIC RNA]</scope>
</reference>
<sequence length="757" mass="86381">MDVNPTLLFLKVPAQNAISTTFPYTGDPPYSHGTGTGYTMDTVNRTHQYSEKGKWTTNTETGAPQLNPIDGPLPEDNEPSGYAQTDCVLEAMAFLEESHPGIFENSCLETMEVVQQTRVDKLTQGRQTYDWTLNRNQPAATALANTIEVFRSNGLTANESGRLIDFLKDVMESMDKEEIEITTHFQRKRRVRDNMTKKMVTQRTIGKKKQRVNKRSYLIRALTLNTMTKDAERGKLKRRAIATPGMQIRGFVYFVETLARSICEKLEQSGLPVGGNEKKAKLANVVRKMMTNSQDTELSFTITGDNTKWNENQNPRMFLAMITYITKNQPEWFRNILSIAPIMFSNKMARLGKGYMFESKRMKLRTQIPAEMLASIDLKYFNESTRKKIEKIRPLLIDGTASLSPGMMMGMFNMLSTVLGVSILNLGQKKYTKTTYWWDGLQSSDDFALIVNAPNHEGIQAGVDRFYRTCKLVGINMSKKKSYINKTGTFEFTSFFYRYGFVANFSMELPSFGVSGINESADMSIGVTVIKNNMINNDLGPATAQMALQLFIKDYRYTYRCHRGDTQIQTRRSFELKKLWEQTQSKAGLLVSDGGPNLYNIRNLHIPEVCLKWELMDEDYQGRLCNPLNPFVSHKEIESVNNAVVMPAHGPAKSMEYDAVATTHSWIPKRNRSILNTSQRGILEDEQMYQKCCNLFEKFFPSSSYRRPVGISSMVEAMVSRARIDARIDFESGRIKKEEFSEIMKICSTIEELRRQK</sequence>
<organism>
    <name type="scientific">Influenza A virus (strain A/Memphis/4/1980 H3N2)</name>
    <dbReference type="NCBI Taxonomy" id="383578"/>
    <lineage>
        <taxon>Viruses</taxon>
        <taxon>Riboviria</taxon>
        <taxon>Orthornavirae</taxon>
        <taxon>Negarnaviricota</taxon>
        <taxon>Polyploviricotina</taxon>
        <taxon>Insthoviricetes</taxon>
        <taxon>Articulavirales</taxon>
        <taxon>Orthomyxoviridae</taxon>
        <taxon>Alphainfluenzavirus</taxon>
        <taxon>Alphainfluenzavirus influenzae</taxon>
        <taxon>Influenza A virus</taxon>
    </lineage>
</organism>